<organism>
    <name type="scientific">Mus musculus</name>
    <name type="common">Mouse</name>
    <dbReference type="NCBI Taxonomy" id="10090"/>
    <lineage>
        <taxon>Eukaryota</taxon>
        <taxon>Metazoa</taxon>
        <taxon>Chordata</taxon>
        <taxon>Craniata</taxon>
        <taxon>Vertebrata</taxon>
        <taxon>Euteleostomi</taxon>
        <taxon>Mammalia</taxon>
        <taxon>Eutheria</taxon>
        <taxon>Euarchontoglires</taxon>
        <taxon>Glires</taxon>
        <taxon>Rodentia</taxon>
        <taxon>Myomorpha</taxon>
        <taxon>Muroidea</taxon>
        <taxon>Muridae</taxon>
        <taxon>Murinae</taxon>
        <taxon>Mus</taxon>
        <taxon>Mus</taxon>
    </lineage>
</organism>
<sequence>MAGCCSVLGSFLFEYDTPRIVLIRSRKVGLMNRVVQLLILAYVIGWVFVWEKGYQETDSVVSSVTTKAKGVAVTNTSQLGFRIWDVADYVVPAQEENSLFIMTNMIVTVNQTQGTCPEIPDKTSICDSDANCTLGSSDTHSSGIGTGRCVPFNASVKTCEVAAWCPVENDAGVPTPAFLKAAENFTLLVKNNIWYPKFNFSKRNILPNITTSYLKSCIYNARTDPFCPIFRLGQIVADAGHSFQEMAVEGGIMGIQIKWDCNLDRAASHCLPRYSFRRLDTRDLEHNVSPGYNFRFAKYYRDLAGNEQRTLTKAYGIRFDIIVFGKAGKFDIIPTMINVGSGLALLGVATVLCDVIVLYCMKKRYYYRDKKYKYVEDYEQGLSGEMNQ</sequence>
<keyword id="KW-0025">Alternative splicing</keyword>
<keyword id="KW-0067">ATP-binding</keyword>
<keyword id="KW-1003">Cell membrane</keyword>
<keyword id="KW-1015">Disulfide bond</keyword>
<keyword id="KW-0325">Glycoprotein</keyword>
<keyword id="KW-0407">Ion channel</keyword>
<keyword id="KW-0406">Ion transport</keyword>
<keyword id="KW-1071">Ligand-gated ion channel</keyword>
<keyword id="KW-0458">Lysosome</keyword>
<keyword id="KW-0472">Membrane</keyword>
<keyword id="KW-0547">Nucleotide-binding</keyword>
<keyword id="KW-0675">Receptor</keyword>
<keyword id="KW-1185">Reference proteome</keyword>
<keyword id="KW-0812">Transmembrane</keyword>
<keyword id="KW-1133">Transmembrane helix</keyword>
<keyword id="KW-0813">Transport</keyword>
<proteinExistence type="evidence at protein level"/>
<comment type="function">
    <text evidence="2 3 5 6 7 8">ATP-gated nonselective transmembrane cation channel permeable to potassium, sodium and calcium. CTP, but not GTP or UTP, functions as a weak affinity agonist for P2RX4 (By similarity). Activated by extracellularly released ATP, it plays multiple role in immunity and central nervous system physiology (PubMed:26456657, PubMed:35119925). Plays a key role in initial steps of T-cell activation and Ca(2+) microdomain formation (PubMed:35119925). Also participates in basal T-cell activity without TCR/CD3 stimulation (PubMed:35119925). Promotes the differentiation and activation of Th17 cells via expression of retinoic acid-related orphan receptor C/RORC (By similarity). Upon activation, drives microglia motility via the PI3K/Akt pathway (PubMed:17299767). Could also function as an ATP-gated cation channel of lysosomal membranes (PubMed:27477609).</text>
</comment>
<comment type="catalytic activity">
    <reaction evidence="3">
        <text>K(+)(in) = K(+)(out)</text>
        <dbReference type="Rhea" id="RHEA:29463"/>
        <dbReference type="ChEBI" id="CHEBI:29103"/>
    </reaction>
</comment>
<comment type="catalytic activity">
    <reaction evidence="3">
        <text>Na(+)(in) = Na(+)(out)</text>
        <dbReference type="Rhea" id="RHEA:34963"/>
        <dbReference type="ChEBI" id="CHEBI:29101"/>
    </reaction>
</comment>
<comment type="catalytic activity">
    <reaction evidence="3">
        <text>Ca(2+)(in) = Ca(2+)(out)</text>
        <dbReference type="Rhea" id="RHEA:29671"/>
        <dbReference type="ChEBI" id="CHEBI:29108"/>
    </reaction>
</comment>
<comment type="activity regulation">
    <text evidence="2 7">Activated by ATP (PubMed:27477609). pH-dependent and inhibited by acidic pH (By similarity).</text>
</comment>
<comment type="subunit">
    <text evidence="2 6">Functional P2RXs are organized as homomeric and heteromeric trimers. Functional P2XRs are organized as homomeric and heteromeric trimers. Forms heterotrimer with P2RX1 (By similarity). Interacts with P2RX7 (via C-terminus); this interaction is functional only in the presence of ATP (PubMed:26456657). Forms heterotrimer with P2RX4; functional differences between homomeric P2RX4 and P2RX4/6 heterotrimer are minor (By similarity). Interacts with AP1M2 (By similarity).</text>
</comment>
<comment type="subcellular location">
    <subcellularLocation>
        <location evidence="3">Cell membrane</location>
        <topology evidence="1">Multi-pass membrane protein</topology>
    </subcellularLocation>
    <subcellularLocation>
        <location evidence="7">Lysosome membrane</location>
        <topology evidence="4">Multi-pass membrane protein</topology>
    </subcellularLocation>
</comment>
<comment type="alternative products">
    <event type="alternative splicing"/>
    <isoform>
        <id>Q9JJX6-1</id>
        <name>a</name>
        <name>P2X4a</name>
        <sequence type="displayed"/>
    </isoform>
    <isoform>
        <id>Q9JJX6-2</id>
        <name>b</name>
        <name>P2X4b</name>
        <sequence type="described" ref="VSP_022023"/>
    </isoform>
    <isoform>
        <id>Q9JJX6-3</id>
        <name>c</name>
        <name>P2X4c</name>
        <sequence type="described" ref="VSP_022024"/>
    </isoform>
    <isoform>
        <id>Q9JJX6-4</id>
        <name>d</name>
        <name>P2X4d</name>
        <sequence type="described" ref="VSP_022023 VSP_022024"/>
    </isoform>
</comment>
<comment type="induction">
    <text evidence="8">By immediate ATP release following TCR stimulation (PubMed:35119925).</text>
</comment>
<comment type="disruption phenotype">
    <text evidence="6 8">Mutant T-cells show decreased Ca(2+) microdomains directly in the initial period after TCR stimulation (PubMed:35119925). In macrophages, an attenuation of P2X7-induced cell death is observed correlated with altered cleavage of caspase-1/CASP1 and a decrease in IL-1beta production (PubMed:26456657).</text>
</comment>
<comment type="similarity">
    <text evidence="10">Belongs to the P2X receptor family.</text>
</comment>
<protein>
    <recommendedName>
        <fullName>P2X purinoceptor 4</fullName>
        <shortName>P2X4</shortName>
    </recommendedName>
    <alternativeName>
        <fullName>ATP receptor</fullName>
    </alternativeName>
    <alternativeName>
        <fullName>Purinergic receptor</fullName>
    </alternativeName>
</protein>
<accession>Q9JJX6</accession>
<accession>Q9JJX3</accession>
<accession>Q9JJX4</accession>
<accession>Q9JJX5</accession>
<dbReference type="EMBL" id="AJ251459">
    <property type="protein sequence ID" value="CAB90749.1"/>
    <property type="molecule type" value="mRNA"/>
</dbReference>
<dbReference type="EMBL" id="AJ251460">
    <property type="protein sequence ID" value="CAB90750.1"/>
    <property type="molecule type" value="mRNA"/>
</dbReference>
<dbReference type="EMBL" id="AJ251461">
    <property type="protein sequence ID" value="CAB90751.1"/>
    <property type="molecule type" value="mRNA"/>
</dbReference>
<dbReference type="EMBL" id="AJ251462">
    <property type="protein sequence ID" value="CAB90752.1"/>
    <property type="molecule type" value="mRNA"/>
</dbReference>
<dbReference type="CCDS" id="CCDS19654.2">
    <molecule id="Q9JJX6-1"/>
</dbReference>
<dbReference type="CCDS" id="CCDS80392.1">
    <molecule id="Q9JJX6-3"/>
</dbReference>
<dbReference type="CCDS" id="CCDS80393.1">
    <molecule id="Q9JJX6-2"/>
</dbReference>
<dbReference type="SMR" id="Q9JJX6"/>
<dbReference type="FunCoup" id="Q9JJX6">
    <property type="interactions" value="64"/>
</dbReference>
<dbReference type="STRING" id="10090.ENSMUSP00000031429"/>
<dbReference type="BindingDB" id="Q9JJX6"/>
<dbReference type="ChEMBL" id="CHEMBL2176849"/>
<dbReference type="DrugCentral" id="Q9JJX6"/>
<dbReference type="GuidetoPHARMACOLOGY" id="481"/>
<dbReference type="GlyConnect" id="2572">
    <property type="glycosylation" value="2 N-Linked glycans (2 sites)"/>
</dbReference>
<dbReference type="GlyCosmos" id="Q9JJX6">
    <property type="glycosylation" value="7 sites, 2 glycans"/>
</dbReference>
<dbReference type="GlyGen" id="Q9JJX6">
    <property type="glycosylation" value="9 sites, 7 N-linked glycans (8 sites)"/>
</dbReference>
<dbReference type="iPTMnet" id="Q9JJX6"/>
<dbReference type="PhosphoSitePlus" id="Q9JJX6"/>
<dbReference type="SwissPalm" id="Q9JJX6"/>
<dbReference type="jPOST" id="Q9JJX6"/>
<dbReference type="PaxDb" id="10090-ENSMUSP00000031429"/>
<dbReference type="PeptideAtlas" id="Q9JJX6"/>
<dbReference type="ProteomicsDB" id="294289">
    <molecule id="Q9JJX6-1"/>
</dbReference>
<dbReference type="ProteomicsDB" id="294290">
    <molecule id="Q9JJX6-2"/>
</dbReference>
<dbReference type="ProteomicsDB" id="294291">
    <molecule id="Q9JJX6-3"/>
</dbReference>
<dbReference type="ProteomicsDB" id="294292">
    <molecule id="Q9JJX6-4"/>
</dbReference>
<dbReference type="Pumba" id="Q9JJX6"/>
<dbReference type="AGR" id="MGI:1338859"/>
<dbReference type="MGI" id="MGI:1338859">
    <property type="gene designation" value="P2rx4"/>
</dbReference>
<dbReference type="eggNOG" id="ENOG502QSUI">
    <property type="taxonomic scope" value="Eukaryota"/>
</dbReference>
<dbReference type="InParanoid" id="Q9JJX6"/>
<dbReference type="PhylomeDB" id="Q9JJX6"/>
<dbReference type="Reactome" id="R-MMU-139853">
    <property type="pathway name" value="Elevation of cytosolic Ca2+ levels"/>
</dbReference>
<dbReference type="Reactome" id="R-MMU-418346">
    <property type="pathway name" value="Platelet homeostasis"/>
</dbReference>
<dbReference type="PRO" id="PR:Q9JJX6"/>
<dbReference type="Proteomes" id="UP000000589">
    <property type="component" value="Unplaced"/>
</dbReference>
<dbReference type="RNAct" id="Q9JJX6">
    <property type="molecule type" value="protein"/>
</dbReference>
<dbReference type="GO" id="GO:0045177">
    <property type="term" value="C:apical part of cell"/>
    <property type="evidence" value="ECO:0000314"/>
    <property type="project" value="MGI"/>
</dbReference>
<dbReference type="GO" id="GO:0005765">
    <property type="term" value="C:lysosomal membrane"/>
    <property type="evidence" value="ECO:0000314"/>
    <property type="project" value="UniProt"/>
</dbReference>
<dbReference type="GO" id="GO:0005886">
    <property type="term" value="C:plasma membrane"/>
    <property type="evidence" value="ECO:0000250"/>
    <property type="project" value="UniProtKB"/>
</dbReference>
<dbReference type="GO" id="GO:0098794">
    <property type="term" value="C:postsynapse"/>
    <property type="evidence" value="ECO:0007669"/>
    <property type="project" value="GOC"/>
</dbReference>
<dbReference type="GO" id="GO:0005524">
    <property type="term" value="F:ATP binding"/>
    <property type="evidence" value="ECO:0007669"/>
    <property type="project" value="UniProtKB-KW"/>
</dbReference>
<dbReference type="GO" id="GO:0035381">
    <property type="term" value="F:ATP-gated ion channel activity"/>
    <property type="evidence" value="ECO:0000250"/>
    <property type="project" value="UniProtKB"/>
</dbReference>
<dbReference type="GO" id="GO:0004931">
    <property type="term" value="F:extracellularly ATP-gated monoatomic cation channel activity"/>
    <property type="evidence" value="ECO:0000315"/>
    <property type="project" value="MGI"/>
</dbReference>
<dbReference type="GO" id="GO:0099094">
    <property type="term" value="F:ligand-gated monoatomic cation channel activity"/>
    <property type="evidence" value="ECO:0000314"/>
    <property type="project" value="UniProt"/>
</dbReference>
<dbReference type="GO" id="GO:0001614">
    <property type="term" value="F:purinergic nucleotide receptor activity"/>
    <property type="evidence" value="ECO:0007669"/>
    <property type="project" value="InterPro"/>
</dbReference>
<dbReference type="GO" id="GO:0070588">
    <property type="term" value="P:calcium ion transmembrane transport"/>
    <property type="evidence" value="ECO:0000250"/>
    <property type="project" value="UniProtKB"/>
</dbReference>
<dbReference type="GO" id="GO:0006816">
    <property type="term" value="P:calcium ion transport"/>
    <property type="evidence" value="ECO:0000315"/>
    <property type="project" value="MGI"/>
</dbReference>
<dbReference type="GO" id="GO:0071318">
    <property type="term" value="P:cellular response to ATP"/>
    <property type="evidence" value="ECO:0000250"/>
    <property type="project" value="UniProtKB"/>
</dbReference>
<dbReference type="GO" id="GO:0071294">
    <property type="term" value="P:cellular response to zinc ion"/>
    <property type="evidence" value="ECO:0000250"/>
    <property type="project" value="UniProtKB"/>
</dbReference>
<dbReference type="GO" id="GO:0060079">
    <property type="term" value="P:excitatory postsynaptic potential"/>
    <property type="evidence" value="ECO:0000315"/>
    <property type="project" value="MGI"/>
</dbReference>
<dbReference type="GO" id="GO:0006809">
    <property type="term" value="P:nitric oxide biosynthetic process"/>
    <property type="evidence" value="ECO:0000314"/>
    <property type="project" value="MGI"/>
</dbReference>
<dbReference type="GO" id="GO:0042311">
    <property type="term" value="P:vasodilation"/>
    <property type="evidence" value="ECO:0000315"/>
    <property type="project" value="MGI"/>
</dbReference>
<dbReference type="FunFam" id="2.60.490.10:FF:000001">
    <property type="entry name" value="P2X purinoceptor"/>
    <property type="match status" value="1"/>
</dbReference>
<dbReference type="FunFam" id="1.10.287.940:FF:000010">
    <property type="entry name" value="P2X receptor E"/>
    <property type="match status" value="1"/>
</dbReference>
<dbReference type="Gene3D" id="1.10.287.940">
    <property type="entry name" value="atp-gated p2x4 ion channel"/>
    <property type="match status" value="1"/>
</dbReference>
<dbReference type="Gene3D" id="2.60.490.10">
    <property type="entry name" value="atp-gated p2x4 ion channel domain"/>
    <property type="match status" value="1"/>
</dbReference>
<dbReference type="InterPro" id="IPR003047">
    <property type="entry name" value="P2X4_purnocptor"/>
</dbReference>
<dbReference type="InterPro" id="IPR027309">
    <property type="entry name" value="P2X_extracellular_dom_sf"/>
</dbReference>
<dbReference type="InterPro" id="IPR001429">
    <property type="entry name" value="P2X_purnocptor"/>
</dbReference>
<dbReference type="InterPro" id="IPR053792">
    <property type="entry name" value="P2X_RECEPTOR_CS"/>
</dbReference>
<dbReference type="NCBIfam" id="TIGR00863">
    <property type="entry name" value="P2X"/>
    <property type="match status" value="1"/>
</dbReference>
<dbReference type="PANTHER" id="PTHR10125">
    <property type="entry name" value="P2X PURINOCEPTOR"/>
    <property type="match status" value="1"/>
</dbReference>
<dbReference type="PANTHER" id="PTHR10125:SF18">
    <property type="entry name" value="P2X PURINOCEPTOR 4"/>
    <property type="match status" value="1"/>
</dbReference>
<dbReference type="Pfam" id="PF00864">
    <property type="entry name" value="P2X_receptor"/>
    <property type="match status" value="1"/>
</dbReference>
<dbReference type="PIRSF" id="PIRSF005713">
    <property type="entry name" value="P2X_purinoceptor"/>
    <property type="match status" value="1"/>
</dbReference>
<dbReference type="PRINTS" id="PR01311">
    <property type="entry name" value="P2X4RECEPTOR"/>
</dbReference>
<dbReference type="PRINTS" id="PR01307">
    <property type="entry name" value="P2XRECEPTOR"/>
</dbReference>
<dbReference type="PROSITE" id="PS01212">
    <property type="entry name" value="P2X_RECEPTOR"/>
    <property type="match status" value="1"/>
</dbReference>
<evidence type="ECO:0000250" key="1">
    <source>
        <dbReference type="UniProtKB" id="F8W463"/>
    </source>
</evidence>
<evidence type="ECO:0000250" key="2">
    <source>
        <dbReference type="UniProtKB" id="P51577"/>
    </source>
</evidence>
<evidence type="ECO:0000250" key="3">
    <source>
        <dbReference type="UniProtKB" id="Q99571"/>
    </source>
</evidence>
<evidence type="ECO:0000255" key="4"/>
<evidence type="ECO:0000269" key="5">
    <source>
    </source>
</evidence>
<evidence type="ECO:0000269" key="6">
    <source>
    </source>
</evidence>
<evidence type="ECO:0000269" key="7">
    <source>
    </source>
</evidence>
<evidence type="ECO:0000269" key="8">
    <source>
    </source>
</evidence>
<evidence type="ECO:0000303" key="9">
    <source ref="1"/>
</evidence>
<evidence type="ECO:0000305" key="10"/>
<feature type="chain" id="PRO_0000269194" description="P2X purinoceptor 4">
    <location>
        <begin position="1"/>
        <end position="388"/>
    </location>
</feature>
<feature type="topological domain" description="Cytoplasmic" evidence="1">
    <location>
        <begin position="1"/>
        <end position="33"/>
    </location>
</feature>
<feature type="transmembrane region" description="Helical; Name=1" evidence="1">
    <location>
        <begin position="34"/>
        <end position="54"/>
    </location>
</feature>
<feature type="topological domain" description="Extracellular" evidence="1">
    <location>
        <begin position="55"/>
        <end position="338"/>
    </location>
</feature>
<feature type="transmembrane region" description="Helical; Name=2" evidence="1">
    <location>
        <begin position="339"/>
        <end position="359"/>
    </location>
</feature>
<feature type="topological domain" description="Cytoplasmic" evidence="1">
    <location>
        <begin position="360"/>
        <end position="388"/>
    </location>
</feature>
<feature type="binding site" evidence="1">
    <location>
        <position position="67"/>
    </location>
    <ligand>
        <name>ATP</name>
        <dbReference type="ChEBI" id="CHEBI:30616"/>
    </ligand>
</feature>
<feature type="binding site" evidence="1">
    <location>
        <position position="67"/>
    </location>
    <ligand>
        <name>CTP</name>
        <dbReference type="ChEBI" id="CHEBI:37563"/>
    </ligand>
</feature>
<feature type="binding site" evidence="1">
    <location>
        <position position="69"/>
    </location>
    <ligand>
        <name>ATP</name>
        <dbReference type="ChEBI" id="CHEBI:30616"/>
    </ligand>
</feature>
<feature type="binding site" evidence="1">
    <location>
        <position position="69"/>
    </location>
    <ligand>
        <name>CTP</name>
        <dbReference type="ChEBI" id="CHEBI:37563"/>
    </ligand>
</feature>
<feature type="binding site" evidence="1">
    <location>
        <position position="186"/>
    </location>
    <ligand>
        <name>ATP</name>
        <dbReference type="ChEBI" id="CHEBI:30616"/>
    </ligand>
</feature>
<feature type="binding site" evidence="1">
    <location>
        <position position="186"/>
    </location>
    <ligand>
        <name>CTP</name>
        <dbReference type="ChEBI" id="CHEBI:37563"/>
    </ligand>
</feature>
<feature type="binding site" evidence="1">
    <location>
        <position position="188"/>
    </location>
    <ligand>
        <name>ATP</name>
        <dbReference type="ChEBI" id="CHEBI:30616"/>
    </ligand>
</feature>
<feature type="binding site" evidence="1">
    <location>
        <position position="293"/>
    </location>
    <ligand>
        <name>ATP</name>
        <dbReference type="ChEBI" id="CHEBI:30616"/>
    </ligand>
</feature>
<feature type="binding site" evidence="1">
    <location>
        <position position="293"/>
    </location>
    <ligand>
        <name>CTP</name>
        <dbReference type="ChEBI" id="CHEBI:37563"/>
    </ligand>
</feature>
<feature type="binding site" evidence="1">
    <location>
        <position position="295"/>
    </location>
    <ligand>
        <name>ATP</name>
        <dbReference type="ChEBI" id="CHEBI:30616"/>
    </ligand>
</feature>
<feature type="binding site" evidence="1">
    <location>
        <position position="295"/>
    </location>
    <ligand>
        <name>CTP</name>
        <dbReference type="ChEBI" id="CHEBI:37563"/>
    </ligand>
</feature>
<feature type="binding site" evidence="1">
    <location>
        <position position="313"/>
    </location>
    <ligand>
        <name>ATP</name>
        <dbReference type="ChEBI" id="CHEBI:30616"/>
    </ligand>
</feature>
<feature type="binding site" evidence="1">
    <location>
        <position position="313"/>
    </location>
    <ligand>
        <name>CTP</name>
        <dbReference type="ChEBI" id="CHEBI:37563"/>
    </ligand>
</feature>
<feature type="glycosylation site" description="N-linked (GlcNAc...) asparagine" evidence="4">
    <location>
        <position position="75"/>
    </location>
</feature>
<feature type="glycosylation site" description="N-linked (GlcNAc...) asparagine" evidence="4">
    <location>
        <position position="110"/>
    </location>
</feature>
<feature type="glycosylation site" description="N-linked (GlcNAc...) asparagine" evidence="4">
    <location>
        <position position="131"/>
    </location>
</feature>
<feature type="glycosylation site" description="N-linked (GlcNAc...) asparagine" evidence="4">
    <location>
        <position position="153"/>
    </location>
</feature>
<feature type="glycosylation site" description="N-linked (GlcNAc...) asparagine" evidence="4">
    <location>
        <position position="184"/>
    </location>
</feature>
<feature type="glycosylation site" description="N-linked (GlcNAc...) asparagine" evidence="4">
    <location>
        <position position="199"/>
    </location>
</feature>
<feature type="glycosylation site" description="N-linked (GlcNAc...) asparagine" evidence="4">
    <location>
        <position position="208"/>
    </location>
</feature>
<feature type="disulfide bond" evidence="1">
    <location>
        <begin position="116"/>
        <end position="165"/>
    </location>
</feature>
<feature type="disulfide bond" evidence="1">
    <location>
        <begin position="126"/>
        <end position="149"/>
    </location>
</feature>
<feature type="disulfide bond" evidence="1">
    <location>
        <begin position="132"/>
        <end position="159"/>
    </location>
</feature>
<feature type="disulfide bond" evidence="1">
    <location>
        <begin position="217"/>
        <end position="227"/>
    </location>
</feature>
<feature type="disulfide bond" evidence="1">
    <location>
        <begin position="261"/>
        <end position="270"/>
    </location>
</feature>
<feature type="splice variant" id="VSP_022023" description="In isoform b and isoform d." evidence="9">
    <location>
        <begin position="176"/>
        <end position="202"/>
    </location>
</feature>
<feature type="splice variant" id="VSP_022024" description="In isoform c and isoform d." evidence="9">
    <location>
        <begin position="328"/>
        <end position="349"/>
    </location>
</feature>
<name>P2RX4_MOUSE</name>
<gene>
    <name type="primary">P2rx4</name>
    <name type="synonym">P2x4</name>
</gene>
<reference key="1">
    <citation type="submission" date="1999-12" db="EMBL/GenBank/DDBJ databases">
        <title>Alternatively spliced variants of the mouse P2X4 receptor: cloning and characterisation.</title>
        <authorList>
            <person name="Simon J."/>
            <person name="Michel A.D."/>
            <person name="Chessell I.P."/>
            <person name="Kidd E.J."/>
            <person name="Jones C.A."/>
            <person name="Barnard E.A."/>
            <person name="Humphrey P.P."/>
        </authorList>
    </citation>
    <scope>NUCLEOTIDE SEQUENCE [MRNA] (ISOFORMS A; B; C AND D)</scope>
</reference>
<reference key="2">
    <citation type="journal article" date="2007" name="Glia">
        <title>Involvement of P2X4 and P2Y12 receptors in ATP-induced microglial chemotaxis.</title>
        <authorList>
            <person name="Ohsawa K."/>
            <person name="Irino Y."/>
            <person name="Nakamura Y."/>
            <person name="Akazawa C."/>
            <person name="Inoue K."/>
            <person name="Kohsaka S."/>
        </authorList>
    </citation>
    <scope>FUNCTION</scope>
</reference>
<reference key="3">
    <citation type="journal article" date="2010" name="Cell">
        <title>A tissue-specific atlas of mouse protein phosphorylation and expression.</title>
        <authorList>
            <person name="Huttlin E.L."/>
            <person name="Jedrychowski M.P."/>
            <person name="Elias J.E."/>
            <person name="Goswami T."/>
            <person name="Rad R."/>
            <person name="Beausoleil S.A."/>
            <person name="Villen J."/>
            <person name="Haas W."/>
            <person name="Sowa M.E."/>
            <person name="Gygi S.P."/>
        </authorList>
    </citation>
    <scope>IDENTIFICATION BY MASS SPECTROMETRY [LARGE SCALE ANALYSIS]</scope>
    <source>
        <tissue>Lung</tissue>
        <tissue>Spleen</tissue>
        <tissue>Testis</tissue>
    </source>
</reference>
<reference key="4">
    <citation type="journal article" date="2015" name="Biochem. Biophys. Res. Commun.">
        <title>The P2X7/P2X4 interaction shapes the purinergic response in murine macrophages.</title>
        <authorList>
            <person name="Perez-Flores G."/>
            <person name="Levesque S.A."/>
            <person name="Pacheco J."/>
            <person name="Vaca L."/>
            <person name="Lacroix S."/>
            <person name="Perez-Cornejo P."/>
            <person name="Arreola J."/>
        </authorList>
    </citation>
    <scope>INTERACTION WITH P2X7</scope>
    <scope>FUNCTION</scope>
    <scope>DISRUPTION PHENOTYPE</scope>
</reference>
<reference key="5">
    <citation type="journal article" date="2016" name="J. Physiol. (Lond.)">
        <title>Activation of lysosomal P2X4 by ATP transported into lysosomes via VNUT/SLC17A9 using V-ATPase generated voltage gradient as the driving force.</title>
        <authorList>
            <person name="Zhong X.Z."/>
            <person name="Cao Q."/>
            <person name="Sun X."/>
            <person name="Dong X.P."/>
        </authorList>
    </citation>
    <scope>FUNCTION</scope>
    <scope>ACTIVITY REGULATION</scope>
    <scope>SUBCELLULAR LOCATION</scope>
</reference>
<reference key="6">
    <citation type="journal article" date="2022" name="Sci. Adv.">
        <title>P2X4 and P2X7 are essential players in basal T cell activity and Ca2+ signaling milliseconds after T cell activation.</title>
        <authorList>
            <person name="Brock V.J."/>
            <person name="Wolf I.M.A."/>
            <person name="Er-Lukowiak M."/>
            <person name="Lory N."/>
            <person name="Staehler T."/>
            <person name="Woelk L.M."/>
            <person name="Mittruecker H.W."/>
            <person name="Mueller C.E."/>
            <person name="Koch-Nolte F."/>
            <person name="Rissiek B."/>
            <person name="Werner R."/>
            <person name="Guse A.H."/>
            <person name="Diercks B.P."/>
        </authorList>
    </citation>
    <scope>FUNCTION</scope>
    <scope>DISRUPTION PHENOTYPE</scope>
    <scope>INDUCTION BY ATP</scope>
</reference>